<protein>
    <recommendedName>
        <fullName evidence="8">Beta-glucosidase 19</fullName>
        <shortName evidence="8">AtBGLU19</shortName>
        <ecNumber evidence="1">3.2.1.21</ecNumber>
    </recommendedName>
</protein>
<name>BGL19_ARATH</name>
<gene>
    <name evidence="8" type="primary">BGLU19</name>
    <name evidence="10" type="ordered locus">At3g21370</name>
    <name evidence="11" type="ORF">MHC9.5</name>
</gene>
<feature type="signal peptide" evidence="5">
    <location>
        <begin position="1"/>
        <end position="21"/>
    </location>
</feature>
<feature type="chain" id="PRO_0000389581" description="Beta-glucosidase 19">
    <location>
        <begin position="22"/>
        <end position="527"/>
    </location>
</feature>
<feature type="short sequence motif" description="Prevents secretion from ER" evidence="7">
    <location>
        <begin position="524"/>
        <end position="527"/>
    </location>
</feature>
<feature type="active site" description="Proton donor" evidence="3">
    <location>
        <position position="201"/>
    </location>
</feature>
<feature type="active site" description="Nucleophile" evidence="3">
    <location>
        <position position="418"/>
    </location>
</feature>
<feature type="binding site" evidence="3">
    <location>
        <position position="52"/>
    </location>
    <ligand>
        <name>a beta-D-glucoside</name>
        <dbReference type="ChEBI" id="CHEBI:22798"/>
    </ligand>
</feature>
<feature type="binding site" evidence="3">
    <location>
        <position position="155"/>
    </location>
    <ligand>
        <name>a beta-D-glucoside</name>
        <dbReference type="ChEBI" id="CHEBI:22798"/>
    </ligand>
</feature>
<feature type="binding site" evidence="3">
    <location>
        <begin position="200"/>
        <end position="201"/>
    </location>
    <ligand>
        <name>a beta-D-glucoside</name>
        <dbReference type="ChEBI" id="CHEBI:22798"/>
    </ligand>
</feature>
<feature type="binding site" evidence="3">
    <location>
        <position position="345"/>
    </location>
    <ligand>
        <name>a beta-D-glucoside</name>
        <dbReference type="ChEBI" id="CHEBI:22798"/>
    </ligand>
</feature>
<feature type="binding site" evidence="4">
    <location>
        <position position="418"/>
    </location>
    <ligand>
        <name>a beta-D-glucoside</name>
        <dbReference type="ChEBI" id="CHEBI:22798"/>
    </ligand>
</feature>
<feature type="binding site" evidence="3">
    <location>
        <position position="469"/>
    </location>
    <ligand>
        <name>a beta-D-glucoside</name>
        <dbReference type="ChEBI" id="CHEBI:22798"/>
    </ligand>
</feature>
<feature type="binding site" evidence="3">
    <location>
        <begin position="476"/>
        <end position="477"/>
    </location>
    <ligand>
        <name>a beta-D-glucoside</name>
        <dbReference type="ChEBI" id="CHEBI:22798"/>
    </ligand>
</feature>
<feature type="binding site" evidence="2">
    <location>
        <position position="485"/>
    </location>
    <ligand>
        <name>a beta-D-glucoside</name>
        <dbReference type="ChEBI" id="CHEBI:22798"/>
    </ligand>
</feature>
<feature type="glycosylation site" description="N-linked (GlcNAc...) asparagine" evidence="6">
    <location>
        <position position="183"/>
    </location>
</feature>
<feature type="glycosylation site" description="N-linked (GlcNAc...) asparagine" evidence="6">
    <location>
        <position position="462"/>
    </location>
</feature>
<feature type="glycosylation site" description="N-linked (GlcNAc...) asparagine" evidence="6">
    <location>
        <position position="495"/>
    </location>
</feature>
<feature type="disulfide bond" evidence="3">
    <location>
        <begin position="220"/>
        <end position="231"/>
    </location>
</feature>
<feature type="sequence conflict" description="In Ref. 3; AAL24252." evidence="9" ref="3">
    <original>F</original>
    <variation>L</variation>
    <location>
        <position position="349"/>
    </location>
</feature>
<organism>
    <name type="scientific">Arabidopsis thaliana</name>
    <name type="common">Mouse-ear cress</name>
    <dbReference type="NCBI Taxonomy" id="3702"/>
    <lineage>
        <taxon>Eukaryota</taxon>
        <taxon>Viridiplantae</taxon>
        <taxon>Streptophyta</taxon>
        <taxon>Embryophyta</taxon>
        <taxon>Tracheophyta</taxon>
        <taxon>Spermatophyta</taxon>
        <taxon>Magnoliopsida</taxon>
        <taxon>eudicotyledons</taxon>
        <taxon>Gunneridae</taxon>
        <taxon>Pentapetalae</taxon>
        <taxon>rosids</taxon>
        <taxon>malvids</taxon>
        <taxon>Brassicales</taxon>
        <taxon>Brassicaceae</taxon>
        <taxon>Camelineae</taxon>
        <taxon>Arabidopsis</taxon>
    </lineage>
</organism>
<evidence type="ECO:0000250" key="1">
    <source>
        <dbReference type="UniProtKB" id="O64879"/>
    </source>
</evidence>
<evidence type="ECO:0000250" key="2">
    <source>
        <dbReference type="UniProtKB" id="Q1XH05"/>
    </source>
</evidence>
<evidence type="ECO:0000250" key="3">
    <source>
        <dbReference type="UniProtKB" id="Q7XSK0"/>
    </source>
</evidence>
<evidence type="ECO:0000250" key="4">
    <source>
        <dbReference type="UniProtKB" id="Q9SPP9"/>
    </source>
</evidence>
<evidence type="ECO:0000255" key="5"/>
<evidence type="ECO:0000255" key="6">
    <source>
        <dbReference type="PROSITE-ProRule" id="PRU00498"/>
    </source>
</evidence>
<evidence type="ECO:0000255" key="7">
    <source>
        <dbReference type="PROSITE-ProRule" id="PRU10138"/>
    </source>
</evidence>
<evidence type="ECO:0000303" key="8">
    <source>
    </source>
</evidence>
<evidence type="ECO:0000305" key="9"/>
<evidence type="ECO:0000312" key="10">
    <source>
        <dbReference type="Araport" id="AT3G21370"/>
    </source>
</evidence>
<evidence type="ECO:0000312" key="11">
    <source>
        <dbReference type="EMBL" id="BAB03050.1"/>
    </source>
</evidence>
<reference key="1">
    <citation type="journal article" date="2000" name="DNA Res.">
        <title>Structural analysis of Arabidopsis thaliana chromosome 3. II. Sequence features of the 4,251,695 bp regions covered by 90 P1, TAC and BAC clones.</title>
        <authorList>
            <person name="Kaneko T."/>
            <person name="Katoh T."/>
            <person name="Sato S."/>
            <person name="Nakamura Y."/>
            <person name="Asamizu E."/>
            <person name="Tabata S."/>
        </authorList>
    </citation>
    <scope>NUCLEOTIDE SEQUENCE [LARGE SCALE GENOMIC DNA]</scope>
    <source>
        <strain>cv. Columbia</strain>
    </source>
</reference>
<reference key="2">
    <citation type="journal article" date="2017" name="Plant J.">
        <title>Araport11: a complete reannotation of the Arabidopsis thaliana reference genome.</title>
        <authorList>
            <person name="Cheng C.Y."/>
            <person name="Krishnakumar V."/>
            <person name="Chan A.P."/>
            <person name="Thibaud-Nissen F."/>
            <person name="Schobel S."/>
            <person name="Town C.D."/>
        </authorList>
    </citation>
    <scope>GENOME REANNOTATION</scope>
    <source>
        <strain>cv. Columbia</strain>
    </source>
</reference>
<reference key="3">
    <citation type="journal article" date="2003" name="Science">
        <title>Empirical analysis of transcriptional activity in the Arabidopsis genome.</title>
        <authorList>
            <person name="Yamada K."/>
            <person name="Lim J."/>
            <person name="Dale J.M."/>
            <person name="Chen H."/>
            <person name="Shinn P."/>
            <person name="Palm C.J."/>
            <person name="Southwick A.M."/>
            <person name="Wu H.C."/>
            <person name="Kim C.J."/>
            <person name="Nguyen M."/>
            <person name="Pham P.K."/>
            <person name="Cheuk R.F."/>
            <person name="Karlin-Newmann G."/>
            <person name="Liu S.X."/>
            <person name="Lam B."/>
            <person name="Sakano H."/>
            <person name="Wu T."/>
            <person name="Yu G."/>
            <person name="Miranda M."/>
            <person name="Quach H.L."/>
            <person name="Tripp M."/>
            <person name="Chang C.H."/>
            <person name="Lee J.M."/>
            <person name="Toriumi M.J."/>
            <person name="Chan M.M."/>
            <person name="Tang C.C."/>
            <person name="Onodera C.S."/>
            <person name="Deng J.M."/>
            <person name="Akiyama K."/>
            <person name="Ansari Y."/>
            <person name="Arakawa T."/>
            <person name="Banh J."/>
            <person name="Banno F."/>
            <person name="Bowser L."/>
            <person name="Brooks S.Y."/>
            <person name="Carninci P."/>
            <person name="Chao Q."/>
            <person name="Choy N."/>
            <person name="Enju A."/>
            <person name="Goldsmith A.D."/>
            <person name="Gurjal M."/>
            <person name="Hansen N.F."/>
            <person name="Hayashizaki Y."/>
            <person name="Johnson-Hopson C."/>
            <person name="Hsuan V.W."/>
            <person name="Iida K."/>
            <person name="Karnes M."/>
            <person name="Khan S."/>
            <person name="Koesema E."/>
            <person name="Ishida J."/>
            <person name="Jiang P.X."/>
            <person name="Jones T."/>
            <person name="Kawai J."/>
            <person name="Kamiya A."/>
            <person name="Meyers C."/>
            <person name="Nakajima M."/>
            <person name="Narusaka M."/>
            <person name="Seki M."/>
            <person name="Sakurai T."/>
            <person name="Satou M."/>
            <person name="Tamse R."/>
            <person name="Vaysberg M."/>
            <person name="Wallender E.K."/>
            <person name="Wong C."/>
            <person name="Yamamura Y."/>
            <person name="Yuan S."/>
            <person name="Shinozaki K."/>
            <person name="Davis R.W."/>
            <person name="Theologis A."/>
            <person name="Ecker J.R."/>
        </authorList>
    </citation>
    <scope>NUCLEOTIDE SEQUENCE [LARGE SCALE MRNA]</scope>
    <source>
        <strain>cv. Columbia</strain>
    </source>
</reference>
<reference key="4">
    <citation type="journal article" date="2004" name="Plant Mol. Biol.">
        <title>Functional genomic analysis of Arabidopsis thaliana glycoside hydrolase family 1.</title>
        <authorList>
            <person name="Xu Z."/>
            <person name="Escamilla-Trevino L.L."/>
            <person name="Zeng L."/>
            <person name="Lalgondar M."/>
            <person name="Bevan D.R."/>
            <person name="Winkel B.S.J."/>
            <person name="Mohamed A."/>
            <person name="Cheng C.-L."/>
            <person name="Shih M.-C."/>
            <person name="Poulton J.E."/>
            <person name="Esen A."/>
        </authorList>
    </citation>
    <scope>GENE FAMILY</scope>
    <scope>NOMENCLATURE</scope>
</reference>
<proteinExistence type="evidence at transcript level"/>
<comment type="catalytic activity">
    <reaction evidence="1">
        <text>Hydrolysis of terminal, non-reducing beta-D-glucosyl residues with release of beta-D-glucose.</text>
        <dbReference type="EC" id="3.2.1.21"/>
    </reaction>
</comment>
<comment type="subcellular location">
    <subcellularLocation>
        <location evidence="7">Endoplasmic reticulum lumen</location>
    </subcellularLocation>
</comment>
<comment type="similarity">
    <text evidence="9">Belongs to the glycosyl hydrolase 1 family.</text>
</comment>
<keyword id="KW-1015">Disulfide bond</keyword>
<keyword id="KW-0256">Endoplasmic reticulum</keyword>
<keyword id="KW-0325">Glycoprotein</keyword>
<keyword id="KW-0326">Glycosidase</keyword>
<keyword id="KW-0378">Hydrolase</keyword>
<keyword id="KW-1185">Reference proteome</keyword>
<keyword id="KW-0732">Signal</keyword>
<sequence>MKIPLLGLLLLISLVGSPTRAEEGPVCPKTETLSRASFPEGFMFGTATAAFQVEGAVNEGCRGPSLWDIYTKKFPHRVKNHNADEAVDFYHRYKEDIQLMKKLNTDGFRLSISWPRIFPHGRMEKGISKEGVQFYHDLIDELLKNDITPLVTVFHWDTPADLEDEYGGFLSERIVPDFVEYANFTFHEYGDKVKNWITFNEPWVFSRSGYDVGKKAPGRCSPYVKEFGKLCQDGRSGFEPYVVSHNLLVGHAEAVDAFRKCEKCKGGKIGIAHSPAWFEPEDVEGGQATVNRVLDFVIGWHLDPTTFGDYPQSMKDAVGSRLPRFTKAQKAKLKDSTDFVGINYYTSFFAKADQKVDSRNPTWATDALVEFEPKTVDGSIKIGSQPNTAKMAVYAKGLRKLMKYIKDRYNSPEIIITENGYGEDLGDKDTDLSVALNDHNRKYYLQRHLLALNEAICEDKVNVTSYFLWSLMDNFEWQDGYTARFGVYYIDFKNNLTRMEKESAKWLSEFLKPGLKPSKSSKLHEEL</sequence>
<accession>Q9LIF9</accession>
<accession>Q93Z07</accession>
<dbReference type="EC" id="3.2.1.21" evidence="1"/>
<dbReference type="EMBL" id="AP001305">
    <property type="protein sequence ID" value="BAB03050.1"/>
    <property type="molecule type" value="Genomic_DNA"/>
</dbReference>
<dbReference type="EMBL" id="CP002686">
    <property type="protein sequence ID" value="AEE76501.1"/>
    <property type="molecule type" value="Genomic_DNA"/>
</dbReference>
<dbReference type="EMBL" id="AY058865">
    <property type="protein sequence ID" value="AAL24252.1"/>
    <property type="molecule type" value="mRNA"/>
</dbReference>
<dbReference type="EMBL" id="AY064046">
    <property type="protein sequence ID" value="AAL36402.1"/>
    <property type="molecule type" value="mRNA"/>
</dbReference>
<dbReference type="EMBL" id="AY096383">
    <property type="protein sequence ID" value="AAM20024.1"/>
    <property type="molecule type" value="mRNA"/>
</dbReference>
<dbReference type="RefSeq" id="NP_188774.2">
    <property type="nucleotide sequence ID" value="NM_113032.4"/>
</dbReference>
<dbReference type="SMR" id="Q9LIF9"/>
<dbReference type="BioGRID" id="7023">
    <property type="interactions" value="2"/>
</dbReference>
<dbReference type="FunCoup" id="Q9LIF9">
    <property type="interactions" value="264"/>
</dbReference>
<dbReference type="IntAct" id="Q9LIF9">
    <property type="interactions" value="1"/>
</dbReference>
<dbReference type="STRING" id="3702.Q9LIF9"/>
<dbReference type="CAZy" id="GH1">
    <property type="family name" value="Glycoside Hydrolase Family 1"/>
</dbReference>
<dbReference type="GlyCosmos" id="Q9LIF9">
    <property type="glycosylation" value="3 sites, No reported glycans"/>
</dbReference>
<dbReference type="GlyGen" id="Q9LIF9">
    <property type="glycosylation" value="3 sites"/>
</dbReference>
<dbReference type="iPTMnet" id="Q9LIF9"/>
<dbReference type="PaxDb" id="3702-AT3G21370.1"/>
<dbReference type="ProteomicsDB" id="240395"/>
<dbReference type="EnsemblPlants" id="AT3G21370.1">
    <property type="protein sequence ID" value="AT3G21370.1"/>
    <property type="gene ID" value="AT3G21370"/>
</dbReference>
<dbReference type="GeneID" id="821691"/>
<dbReference type="Gramene" id="AT3G21370.1">
    <property type="protein sequence ID" value="AT3G21370.1"/>
    <property type="gene ID" value="AT3G21370"/>
</dbReference>
<dbReference type="KEGG" id="ath:AT3G21370"/>
<dbReference type="Araport" id="AT3G21370"/>
<dbReference type="TAIR" id="AT3G21370">
    <property type="gene designation" value="BGLU19"/>
</dbReference>
<dbReference type="eggNOG" id="KOG0626">
    <property type="taxonomic scope" value="Eukaryota"/>
</dbReference>
<dbReference type="HOGENOM" id="CLU_001859_1_0_1"/>
<dbReference type="InParanoid" id="Q9LIF9"/>
<dbReference type="OMA" id="QPNTAKM"/>
<dbReference type="OrthoDB" id="65569at2759"/>
<dbReference type="PhylomeDB" id="Q9LIF9"/>
<dbReference type="BioCyc" id="ARA:AT3G21370-MONOMER"/>
<dbReference type="PRO" id="PR:Q9LIF9"/>
<dbReference type="Proteomes" id="UP000006548">
    <property type="component" value="Chromosome 3"/>
</dbReference>
<dbReference type="ExpressionAtlas" id="Q9LIF9">
    <property type="expression patterns" value="baseline and differential"/>
</dbReference>
<dbReference type="GO" id="GO:0005829">
    <property type="term" value="C:cytosol"/>
    <property type="evidence" value="ECO:0007005"/>
    <property type="project" value="TAIR"/>
</dbReference>
<dbReference type="GO" id="GO:0005788">
    <property type="term" value="C:endoplasmic reticulum lumen"/>
    <property type="evidence" value="ECO:0007669"/>
    <property type="project" value="UniProtKB-SubCell"/>
</dbReference>
<dbReference type="GO" id="GO:0008422">
    <property type="term" value="F:beta-glucosidase activity"/>
    <property type="evidence" value="ECO:0007669"/>
    <property type="project" value="UniProtKB-EC"/>
</dbReference>
<dbReference type="GO" id="GO:0005975">
    <property type="term" value="P:carbohydrate metabolic process"/>
    <property type="evidence" value="ECO:0007669"/>
    <property type="project" value="InterPro"/>
</dbReference>
<dbReference type="FunFam" id="3.20.20.80:FF:000022">
    <property type="entry name" value="Beta-glucosidase 11"/>
    <property type="match status" value="1"/>
</dbReference>
<dbReference type="Gene3D" id="3.20.20.80">
    <property type="entry name" value="Glycosidases"/>
    <property type="match status" value="1"/>
</dbReference>
<dbReference type="InterPro" id="IPR001360">
    <property type="entry name" value="Glyco_hydro_1"/>
</dbReference>
<dbReference type="InterPro" id="IPR033132">
    <property type="entry name" value="Glyco_hydro_1_N_CS"/>
</dbReference>
<dbReference type="InterPro" id="IPR017853">
    <property type="entry name" value="Glycoside_hydrolase_SF"/>
</dbReference>
<dbReference type="PANTHER" id="PTHR10353:SF163">
    <property type="entry name" value="BETA-GLUCOSIDASE 19"/>
    <property type="match status" value="1"/>
</dbReference>
<dbReference type="PANTHER" id="PTHR10353">
    <property type="entry name" value="GLYCOSYL HYDROLASE"/>
    <property type="match status" value="1"/>
</dbReference>
<dbReference type="Pfam" id="PF00232">
    <property type="entry name" value="Glyco_hydro_1"/>
    <property type="match status" value="1"/>
</dbReference>
<dbReference type="PRINTS" id="PR00131">
    <property type="entry name" value="GLHYDRLASE1"/>
</dbReference>
<dbReference type="SUPFAM" id="SSF51445">
    <property type="entry name" value="(Trans)glycosidases"/>
    <property type="match status" value="1"/>
</dbReference>
<dbReference type="PROSITE" id="PS00014">
    <property type="entry name" value="ER_TARGET"/>
    <property type="match status" value="1"/>
</dbReference>
<dbReference type="PROSITE" id="PS00653">
    <property type="entry name" value="GLYCOSYL_HYDROL_F1_2"/>
    <property type="match status" value="1"/>
</dbReference>